<proteinExistence type="inferred from homology"/>
<sequence>MLDIKWIRENPEALDAALAKRGAEPLAQNLVALDEKRRSAVQKAQDLLSRRNLASKEIGAALSQKNGELAEKLKVEVAELKAMLPAVEEEDRQLTAELNDALSRIPNIPFDDVPVGKDEHDNVVTRTVGEKPRWNHTPKEHFEIGEALGYMDFERAAKLSGSRFTVLTGPLARLERALGQFMIDLHTREHGYTEVSSPLMVRAEALFGTGNLPKFEEDLFKTTDGRYLIPTAEVTLTNLVREEILDQEKLPLRFTALTPSFRSEAGSAGRDTRGMLRQHQFWKCELVSITDAESAVAEHERMTACAEDVLKRLGLHFRTMTLCTGDMGFGSRKTYDLEVWLPGQNAFREISSCSVCGDFQARRMNARYRGKDDKSNRFVHTLNGSGTAVGRCLIAVLENYLNEDGSVTIPDVLLPYMGGLTKIERAA</sequence>
<reference key="1">
    <citation type="journal article" date="2010" name="Stand. Genomic Sci.">
        <title>Complete genome sequence of Rhizobium leguminosarum bv trifolii strain WSM2304, an effective microsymbiont of the South American clover Trifolium polymorphum.</title>
        <authorList>
            <person name="Reeve W."/>
            <person name="O'Hara G."/>
            <person name="Chain P."/>
            <person name="Ardley J."/>
            <person name="Brau L."/>
            <person name="Nandesena K."/>
            <person name="Tiwari R."/>
            <person name="Malfatti S."/>
            <person name="Kiss H."/>
            <person name="Lapidus A."/>
            <person name="Copeland A."/>
            <person name="Nolan M."/>
            <person name="Land M."/>
            <person name="Ivanova N."/>
            <person name="Mavromatis K."/>
            <person name="Markowitz V."/>
            <person name="Kyrpides N."/>
            <person name="Melino V."/>
            <person name="Denton M."/>
            <person name="Yates R."/>
            <person name="Howieson J."/>
        </authorList>
    </citation>
    <scope>NUCLEOTIDE SEQUENCE [LARGE SCALE GENOMIC DNA]</scope>
    <source>
        <strain>WSM2304</strain>
    </source>
</reference>
<name>SYS_RHILW</name>
<dbReference type="EC" id="6.1.1.11" evidence="1"/>
<dbReference type="EMBL" id="CP001191">
    <property type="protein sequence ID" value="ACI54782.1"/>
    <property type="molecule type" value="Genomic_DNA"/>
</dbReference>
<dbReference type="RefSeq" id="WP_012557486.1">
    <property type="nucleotide sequence ID" value="NC_011369.1"/>
</dbReference>
<dbReference type="SMR" id="B5ZMG0"/>
<dbReference type="STRING" id="395492.Rleg2_1490"/>
<dbReference type="KEGG" id="rlt:Rleg2_1490"/>
<dbReference type="eggNOG" id="COG0172">
    <property type="taxonomic scope" value="Bacteria"/>
</dbReference>
<dbReference type="HOGENOM" id="CLU_023797_1_1_5"/>
<dbReference type="UniPathway" id="UPA00906">
    <property type="reaction ID" value="UER00895"/>
</dbReference>
<dbReference type="Proteomes" id="UP000008330">
    <property type="component" value="Chromosome"/>
</dbReference>
<dbReference type="GO" id="GO:0005737">
    <property type="term" value="C:cytoplasm"/>
    <property type="evidence" value="ECO:0007669"/>
    <property type="project" value="UniProtKB-SubCell"/>
</dbReference>
<dbReference type="GO" id="GO:0005524">
    <property type="term" value="F:ATP binding"/>
    <property type="evidence" value="ECO:0007669"/>
    <property type="project" value="UniProtKB-UniRule"/>
</dbReference>
<dbReference type="GO" id="GO:0004828">
    <property type="term" value="F:serine-tRNA ligase activity"/>
    <property type="evidence" value="ECO:0007669"/>
    <property type="project" value="UniProtKB-UniRule"/>
</dbReference>
<dbReference type="GO" id="GO:0016260">
    <property type="term" value="P:selenocysteine biosynthetic process"/>
    <property type="evidence" value="ECO:0007669"/>
    <property type="project" value="UniProtKB-UniRule"/>
</dbReference>
<dbReference type="GO" id="GO:0006434">
    <property type="term" value="P:seryl-tRNA aminoacylation"/>
    <property type="evidence" value="ECO:0007669"/>
    <property type="project" value="UniProtKB-UniRule"/>
</dbReference>
<dbReference type="CDD" id="cd00770">
    <property type="entry name" value="SerRS_core"/>
    <property type="match status" value="1"/>
</dbReference>
<dbReference type="Gene3D" id="3.30.930.10">
    <property type="entry name" value="Bira Bifunctional Protein, Domain 2"/>
    <property type="match status" value="1"/>
</dbReference>
<dbReference type="Gene3D" id="1.10.287.40">
    <property type="entry name" value="Serine-tRNA synthetase, tRNA binding domain"/>
    <property type="match status" value="1"/>
</dbReference>
<dbReference type="HAMAP" id="MF_00176">
    <property type="entry name" value="Ser_tRNA_synth_type1"/>
    <property type="match status" value="1"/>
</dbReference>
<dbReference type="InterPro" id="IPR002314">
    <property type="entry name" value="aa-tRNA-synt_IIb"/>
</dbReference>
<dbReference type="InterPro" id="IPR006195">
    <property type="entry name" value="aa-tRNA-synth_II"/>
</dbReference>
<dbReference type="InterPro" id="IPR045864">
    <property type="entry name" value="aa-tRNA-synth_II/BPL/LPL"/>
</dbReference>
<dbReference type="InterPro" id="IPR002317">
    <property type="entry name" value="Ser-tRNA-ligase_type_1"/>
</dbReference>
<dbReference type="InterPro" id="IPR015866">
    <property type="entry name" value="Ser-tRNA-synth_1_N"/>
</dbReference>
<dbReference type="InterPro" id="IPR042103">
    <property type="entry name" value="SerRS_1_N_sf"/>
</dbReference>
<dbReference type="InterPro" id="IPR033729">
    <property type="entry name" value="SerRS_core"/>
</dbReference>
<dbReference type="InterPro" id="IPR010978">
    <property type="entry name" value="tRNA-bd_arm"/>
</dbReference>
<dbReference type="NCBIfam" id="TIGR00414">
    <property type="entry name" value="serS"/>
    <property type="match status" value="1"/>
</dbReference>
<dbReference type="PANTHER" id="PTHR43697:SF1">
    <property type="entry name" value="SERINE--TRNA LIGASE"/>
    <property type="match status" value="1"/>
</dbReference>
<dbReference type="PANTHER" id="PTHR43697">
    <property type="entry name" value="SERYL-TRNA SYNTHETASE"/>
    <property type="match status" value="1"/>
</dbReference>
<dbReference type="Pfam" id="PF02403">
    <property type="entry name" value="Seryl_tRNA_N"/>
    <property type="match status" value="1"/>
</dbReference>
<dbReference type="Pfam" id="PF00587">
    <property type="entry name" value="tRNA-synt_2b"/>
    <property type="match status" value="1"/>
</dbReference>
<dbReference type="PIRSF" id="PIRSF001529">
    <property type="entry name" value="Ser-tRNA-synth_IIa"/>
    <property type="match status" value="1"/>
</dbReference>
<dbReference type="PRINTS" id="PR00981">
    <property type="entry name" value="TRNASYNTHSER"/>
</dbReference>
<dbReference type="SUPFAM" id="SSF55681">
    <property type="entry name" value="Class II aaRS and biotin synthetases"/>
    <property type="match status" value="1"/>
</dbReference>
<dbReference type="SUPFAM" id="SSF46589">
    <property type="entry name" value="tRNA-binding arm"/>
    <property type="match status" value="1"/>
</dbReference>
<dbReference type="PROSITE" id="PS50862">
    <property type="entry name" value="AA_TRNA_LIGASE_II"/>
    <property type="match status" value="1"/>
</dbReference>
<protein>
    <recommendedName>
        <fullName evidence="1">Serine--tRNA ligase</fullName>
        <ecNumber evidence="1">6.1.1.11</ecNumber>
    </recommendedName>
    <alternativeName>
        <fullName evidence="1">Seryl-tRNA synthetase</fullName>
        <shortName evidence="1">SerRS</shortName>
    </alternativeName>
    <alternativeName>
        <fullName evidence="1">Seryl-tRNA(Ser/Sec) synthetase</fullName>
    </alternativeName>
</protein>
<organism>
    <name type="scientific">Rhizobium leguminosarum bv. trifolii (strain WSM2304)</name>
    <dbReference type="NCBI Taxonomy" id="395492"/>
    <lineage>
        <taxon>Bacteria</taxon>
        <taxon>Pseudomonadati</taxon>
        <taxon>Pseudomonadota</taxon>
        <taxon>Alphaproteobacteria</taxon>
        <taxon>Hyphomicrobiales</taxon>
        <taxon>Rhizobiaceae</taxon>
        <taxon>Rhizobium/Agrobacterium group</taxon>
        <taxon>Rhizobium</taxon>
    </lineage>
</organism>
<comment type="function">
    <text evidence="1">Catalyzes the attachment of serine to tRNA(Ser). Is also able to aminoacylate tRNA(Sec) with serine, to form the misacylated tRNA L-seryl-tRNA(Sec), which will be further converted into selenocysteinyl-tRNA(Sec).</text>
</comment>
<comment type="catalytic activity">
    <reaction evidence="1">
        <text>tRNA(Ser) + L-serine + ATP = L-seryl-tRNA(Ser) + AMP + diphosphate + H(+)</text>
        <dbReference type="Rhea" id="RHEA:12292"/>
        <dbReference type="Rhea" id="RHEA-COMP:9669"/>
        <dbReference type="Rhea" id="RHEA-COMP:9703"/>
        <dbReference type="ChEBI" id="CHEBI:15378"/>
        <dbReference type="ChEBI" id="CHEBI:30616"/>
        <dbReference type="ChEBI" id="CHEBI:33019"/>
        <dbReference type="ChEBI" id="CHEBI:33384"/>
        <dbReference type="ChEBI" id="CHEBI:78442"/>
        <dbReference type="ChEBI" id="CHEBI:78533"/>
        <dbReference type="ChEBI" id="CHEBI:456215"/>
        <dbReference type="EC" id="6.1.1.11"/>
    </reaction>
</comment>
<comment type="catalytic activity">
    <reaction evidence="1">
        <text>tRNA(Sec) + L-serine + ATP = L-seryl-tRNA(Sec) + AMP + diphosphate + H(+)</text>
        <dbReference type="Rhea" id="RHEA:42580"/>
        <dbReference type="Rhea" id="RHEA-COMP:9742"/>
        <dbReference type="Rhea" id="RHEA-COMP:10128"/>
        <dbReference type="ChEBI" id="CHEBI:15378"/>
        <dbReference type="ChEBI" id="CHEBI:30616"/>
        <dbReference type="ChEBI" id="CHEBI:33019"/>
        <dbReference type="ChEBI" id="CHEBI:33384"/>
        <dbReference type="ChEBI" id="CHEBI:78442"/>
        <dbReference type="ChEBI" id="CHEBI:78533"/>
        <dbReference type="ChEBI" id="CHEBI:456215"/>
        <dbReference type="EC" id="6.1.1.11"/>
    </reaction>
</comment>
<comment type="pathway">
    <text evidence="1">Aminoacyl-tRNA biosynthesis; selenocysteinyl-tRNA(Sec) biosynthesis; L-seryl-tRNA(Sec) from L-serine and tRNA(Sec): step 1/1.</text>
</comment>
<comment type="subunit">
    <text evidence="1">Homodimer. The tRNA molecule binds across the dimer.</text>
</comment>
<comment type="subcellular location">
    <subcellularLocation>
        <location evidence="1">Cytoplasm</location>
    </subcellularLocation>
</comment>
<comment type="domain">
    <text evidence="1">Consists of two distinct domains, a catalytic core and a N-terminal extension that is involved in tRNA binding.</text>
</comment>
<comment type="similarity">
    <text evidence="1">Belongs to the class-II aminoacyl-tRNA synthetase family. Type-1 seryl-tRNA synthetase subfamily.</text>
</comment>
<accession>B5ZMG0</accession>
<keyword id="KW-0030">Aminoacyl-tRNA synthetase</keyword>
<keyword id="KW-0067">ATP-binding</keyword>
<keyword id="KW-0963">Cytoplasm</keyword>
<keyword id="KW-0436">Ligase</keyword>
<keyword id="KW-0547">Nucleotide-binding</keyword>
<keyword id="KW-0648">Protein biosynthesis</keyword>
<keyword id="KW-1185">Reference proteome</keyword>
<gene>
    <name evidence="1" type="primary">serS</name>
    <name type="ordered locus">Rleg2_1490</name>
</gene>
<evidence type="ECO:0000255" key="1">
    <source>
        <dbReference type="HAMAP-Rule" id="MF_00176"/>
    </source>
</evidence>
<feature type="chain" id="PRO_1000098113" description="Serine--tRNA ligase">
    <location>
        <begin position="1"/>
        <end position="427"/>
    </location>
</feature>
<feature type="binding site" evidence="1">
    <location>
        <begin position="231"/>
        <end position="233"/>
    </location>
    <ligand>
        <name>L-serine</name>
        <dbReference type="ChEBI" id="CHEBI:33384"/>
    </ligand>
</feature>
<feature type="binding site" evidence="1">
    <location>
        <begin position="262"/>
        <end position="264"/>
    </location>
    <ligand>
        <name>ATP</name>
        <dbReference type="ChEBI" id="CHEBI:30616"/>
    </ligand>
</feature>
<feature type="binding site" evidence="1">
    <location>
        <position position="285"/>
    </location>
    <ligand>
        <name>L-serine</name>
        <dbReference type="ChEBI" id="CHEBI:33384"/>
    </ligand>
</feature>
<feature type="binding site" evidence="1">
    <location>
        <begin position="349"/>
        <end position="352"/>
    </location>
    <ligand>
        <name>ATP</name>
        <dbReference type="ChEBI" id="CHEBI:30616"/>
    </ligand>
</feature>
<feature type="binding site" evidence="1">
    <location>
        <position position="385"/>
    </location>
    <ligand>
        <name>L-serine</name>
        <dbReference type="ChEBI" id="CHEBI:33384"/>
    </ligand>
</feature>